<keyword id="KW-0325">Glycoprotein</keyword>
<keyword id="KW-0433">Leucine-rich repeat</keyword>
<keyword id="KW-0472">Membrane</keyword>
<keyword id="KW-1267">Proteomics identification</keyword>
<keyword id="KW-1185">Reference proteome</keyword>
<keyword id="KW-0677">Repeat</keyword>
<keyword id="KW-0732">Signal</keyword>
<keyword id="KW-0812">Transmembrane</keyword>
<keyword id="KW-1133">Transmembrane helix</keyword>
<feature type="signal peptide" evidence="2">
    <location>
        <begin position="1"/>
        <end position="18"/>
    </location>
</feature>
<feature type="chain" id="PRO_0000021029" description="Leucine-rich repeat neuronal protein 4">
    <location>
        <begin position="19"/>
        <end position="740"/>
    </location>
</feature>
<feature type="topological domain" description="Extracellular" evidence="2">
    <location>
        <begin position="19"/>
        <end position="679"/>
    </location>
</feature>
<feature type="transmembrane region" description="Helical" evidence="2">
    <location>
        <begin position="680"/>
        <end position="700"/>
    </location>
</feature>
<feature type="topological domain" description="Cytoplasmic" evidence="2">
    <location>
        <begin position="701"/>
        <end position="740"/>
    </location>
</feature>
<feature type="repeat" description="LRR 1">
    <location>
        <begin position="51"/>
        <end position="74"/>
    </location>
</feature>
<feature type="repeat" description="LRR 2">
    <location>
        <begin position="75"/>
        <end position="97"/>
    </location>
</feature>
<feature type="repeat" description="LRR 3">
    <location>
        <begin position="98"/>
        <end position="123"/>
    </location>
</feature>
<feature type="repeat" description="LRR 4">
    <location>
        <begin position="125"/>
        <end position="144"/>
    </location>
</feature>
<feature type="repeat" description="LRR 5">
    <location>
        <begin position="145"/>
        <end position="168"/>
    </location>
</feature>
<feature type="repeat" description="LRR 6">
    <location>
        <begin position="174"/>
        <end position="197"/>
    </location>
</feature>
<feature type="repeat" description="LRR 7">
    <location>
        <begin position="203"/>
        <end position="226"/>
    </location>
</feature>
<feature type="repeat" description="LRR 8">
    <location>
        <begin position="228"/>
        <end position="251"/>
    </location>
</feature>
<feature type="repeat" description="LRR 9">
    <location>
        <begin position="253"/>
        <end position="276"/>
    </location>
</feature>
<feature type="repeat" description="LRR 10">
    <location>
        <begin position="277"/>
        <end position="300"/>
    </location>
</feature>
<feature type="domain" description="Fibronectin type-III" evidence="3">
    <location>
        <begin position="579"/>
        <end position="679"/>
    </location>
</feature>
<feature type="region of interest" description="Disordered" evidence="4">
    <location>
        <begin position="389"/>
        <end position="517"/>
    </location>
</feature>
<feature type="compositionally biased region" description="Polar residues" evidence="4">
    <location>
        <begin position="430"/>
        <end position="454"/>
    </location>
</feature>
<feature type="compositionally biased region" description="Polar residues" evidence="4">
    <location>
        <begin position="490"/>
        <end position="514"/>
    </location>
</feature>
<feature type="glycosylation site" description="N-linked (GlcNAc...) asparagine" evidence="2">
    <location>
        <position position="42"/>
    </location>
</feature>
<feature type="glycosylation site" description="N-linked (GlcNAc...) asparagine" evidence="2">
    <location>
        <position position="176"/>
    </location>
</feature>
<feature type="glycosylation site" description="N-linked (GlcNAc...) asparagine" evidence="2">
    <location>
        <position position="289"/>
    </location>
</feature>
<feature type="glycosylation site" description="N-linked (GlcNAc...) asparagine" evidence="2">
    <location>
        <position position="379"/>
    </location>
</feature>
<feature type="glycosylation site" description="N-linked (GlcNAc...) asparagine" evidence="2">
    <location>
        <position position="442"/>
    </location>
</feature>
<feature type="glycosylation site" description="N-linked (GlcNAc...) asparagine" evidence="2">
    <location>
        <position position="622"/>
    </location>
</feature>
<feature type="sequence variant" id="VAR_025548" description="In dbSNP:rs6107751." evidence="5">
    <original>P</original>
    <variation>L</variation>
    <location>
        <position position="138"/>
    </location>
</feature>
<feature type="sequence variant" id="VAR_051143" description="In dbSNP:rs1884643.">
    <original>T</original>
    <variation>A</variation>
    <location>
        <position position="141"/>
    </location>
</feature>
<reference key="1">
    <citation type="journal article" date="2004" name="Nat. Genet.">
        <title>Complete sequencing and characterization of 21,243 full-length human cDNAs.</title>
        <authorList>
            <person name="Ota T."/>
            <person name="Suzuki Y."/>
            <person name="Nishikawa T."/>
            <person name="Otsuki T."/>
            <person name="Sugiyama T."/>
            <person name="Irie R."/>
            <person name="Wakamatsu A."/>
            <person name="Hayashi K."/>
            <person name="Sato H."/>
            <person name="Nagai K."/>
            <person name="Kimura K."/>
            <person name="Makita H."/>
            <person name="Sekine M."/>
            <person name="Obayashi M."/>
            <person name="Nishi T."/>
            <person name="Shibahara T."/>
            <person name="Tanaka T."/>
            <person name="Ishii S."/>
            <person name="Yamamoto J."/>
            <person name="Saito K."/>
            <person name="Kawai Y."/>
            <person name="Isono Y."/>
            <person name="Nakamura Y."/>
            <person name="Nagahari K."/>
            <person name="Murakami K."/>
            <person name="Yasuda T."/>
            <person name="Iwayanagi T."/>
            <person name="Wagatsuma M."/>
            <person name="Shiratori A."/>
            <person name="Sudo H."/>
            <person name="Hosoiri T."/>
            <person name="Kaku Y."/>
            <person name="Kodaira H."/>
            <person name="Kondo H."/>
            <person name="Sugawara M."/>
            <person name="Takahashi M."/>
            <person name="Kanda K."/>
            <person name="Yokoi T."/>
            <person name="Furuya T."/>
            <person name="Kikkawa E."/>
            <person name="Omura Y."/>
            <person name="Abe K."/>
            <person name="Kamihara K."/>
            <person name="Katsuta N."/>
            <person name="Sato K."/>
            <person name="Tanikawa M."/>
            <person name="Yamazaki M."/>
            <person name="Ninomiya K."/>
            <person name="Ishibashi T."/>
            <person name="Yamashita H."/>
            <person name="Murakawa K."/>
            <person name="Fujimori K."/>
            <person name="Tanai H."/>
            <person name="Kimata M."/>
            <person name="Watanabe M."/>
            <person name="Hiraoka S."/>
            <person name="Chiba Y."/>
            <person name="Ishida S."/>
            <person name="Ono Y."/>
            <person name="Takiguchi S."/>
            <person name="Watanabe S."/>
            <person name="Yosida M."/>
            <person name="Hotuta T."/>
            <person name="Kusano J."/>
            <person name="Kanehori K."/>
            <person name="Takahashi-Fujii A."/>
            <person name="Hara H."/>
            <person name="Tanase T.-O."/>
            <person name="Nomura Y."/>
            <person name="Togiya S."/>
            <person name="Komai F."/>
            <person name="Hara R."/>
            <person name="Takeuchi K."/>
            <person name="Arita M."/>
            <person name="Imose N."/>
            <person name="Musashino K."/>
            <person name="Yuuki H."/>
            <person name="Oshima A."/>
            <person name="Sasaki N."/>
            <person name="Aotsuka S."/>
            <person name="Yoshikawa Y."/>
            <person name="Matsunawa H."/>
            <person name="Ichihara T."/>
            <person name="Shiohata N."/>
            <person name="Sano S."/>
            <person name="Moriya S."/>
            <person name="Momiyama H."/>
            <person name="Satoh N."/>
            <person name="Takami S."/>
            <person name="Terashima Y."/>
            <person name="Suzuki O."/>
            <person name="Nakagawa S."/>
            <person name="Senoh A."/>
            <person name="Mizoguchi H."/>
            <person name="Goto Y."/>
            <person name="Shimizu F."/>
            <person name="Wakebe H."/>
            <person name="Hishigaki H."/>
            <person name="Watanabe T."/>
            <person name="Sugiyama A."/>
            <person name="Takemoto M."/>
            <person name="Kawakami B."/>
            <person name="Yamazaki M."/>
            <person name="Watanabe K."/>
            <person name="Kumagai A."/>
            <person name="Itakura S."/>
            <person name="Fukuzumi Y."/>
            <person name="Fujimori Y."/>
            <person name="Komiyama M."/>
            <person name="Tashiro H."/>
            <person name="Tanigami A."/>
            <person name="Fujiwara T."/>
            <person name="Ono T."/>
            <person name="Yamada K."/>
            <person name="Fujii Y."/>
            <person name="Ozaki K."/>
            <person name="Hirao M."/>
            <person name="Ohmori Y."/>
            <person name="Kawabata A."/>
            <person name="Hikiji T."/>
            <person name="Kobatake N."/>
            <person name="Inagaki H."/>
            <person name="Ikema Y."/>
            <person name="Okamoto S."/>
            <person name="Okitani R."/>
            <person name="Kawakami T."/>
            <person name="Noguchi S."/>
            <person name="Itoh T."/>
            <person name="Shigeta K."/>
            <person name="Senba T."/>
            <person name="Matsumura K."/>
            <person name="Nakajima Y."/>
            <person name="Mizuno T."/>
            <person name="Morinaga M."/>
            <person name="Sasaki M."/>
            <person name="Togashi T."/>
            <person name="Oyama M."/>
            <person name="Hata H."/>
            <person name="Watanabe M."/>
            <person name="Komatsu T."/>
            <person name="Mizushima-Sugano J."/>
            <person name="Satoh T."/>
            <person name="Shirai Y."/>
            <person name="Takahashi Y."/>
            <person name="Nakagawa K."/>
            <person name="Okumura K."/>
            <person name="Nagase T."/>
            <person name="Nomura N."/>
            <person name="Kikuchi H."/>
            <person name="Masuho Y."/>
            <person name="Yamashita R."/>
            <person name="Nakai K."/>
            <person name="Yada T."/>
            <person name="Nakamura Y."/>
            <person name="Ohara O."/>
            <person name="Isogai T."/>
            <person name="Sugano S."/>
        </authorList>
    </citation>
    <scope>NUCLEOTIDE SEQUENCE [LARGE SCALE MRNA]</scope>
    <source>
        <tissue>Thalamus</tissue>
    </source>
</reference>
<reference key="2">
    <citation type="journal article" date="2001" name="Nature">
        <title>The DNA sequence and comparative analysis of human chromosome 20.</title>
        <authorList>
            <person name="Deloukas P."/>
            <person name="Matthews L.H."/>
            <person name="Ashurst J.L."/>
            <person name="Burton J."/>
            <person name="Gilbert J.G.R."/>
            <person name="Jones M."/>
            <person name="Stavrides G."/>
            <person name="Almeida J.P."/>
            <person name="Babbage A.K."/>
            <person name="Bagguley C.L."/>
            <person name="Bailey J."/>
            <person name="Barlow K.F."/>
            <person name="Bates K.N."/>
            <person name="Beard L.M."/>
            <person name="Beare D.M."/>
            <person name="Beasley O.P."/>
            <person name="Bird C.P."/>
            <person name="Blakey S.E."/>
            <person name="Bridgeman A.M."/>
            <person name="Brown A.J."/>
            <person name="Buck D."/>
            <person name="Burrill W.D."/>
            <person name="Butler A.P."/>
            <person name="Carder C."/>
            <person name="Carter N.P."/>
            <person name="Chapman J.C."/>
            <person name="Clamp M."/>
            <person name="Clark G."/>
            <person name="Clark L.N."/>
            <person name="Clark S.Y."/>
            <person name="Clee C.M."/>
            <person name="Clegg S."/>
            <person name="Cobley V.E."/>
            <person name="Collier R.E."/>
            <person name="Connor R.E."/>
            <person name="Corby N.R."/>
            <person name="Coulson A."/>
            <person name="Coville G.J."/>
            <person name="Deadman R."/>
            <person name="Dhami P.D."/>
            <person name="Dunn M."/>
            <person name="Ellington A.G."/>
            <person name="Frankland J.A."/>
            <person name="Fraser A."/>
            <person name="French L."/>
            <person name="Garner P."/>
            <person name="Grafham D.V."/>
            <person name="Griffiths C."/>
            <person name="Griffiths M.N.D."/>
            <person name="Gwilliam R."/>
            <person name="Hall R.E."/>
            <person name="Hammond S."/>
            <person name="Harley J.L."/>
            <person name="Heath P.D."/>
            <person name="Ho S."/>
            <person name="Holden J.L."/>
            <person name="Howden P.J."/>
            <person name="Huckle E."/>
            <person name="Hunt A.R."/>
            <person name="Hunt S.E."/>
            <person name="Jekosch K."/>
            <person name="Johnson C.M."/>
            <person name="Johnson D."/>
            <person name="Kay M.P."/>
            <person name="Kimberley A.M."/>
            <person name="King A."/>
            <person name="Knights A."/>
            <person name="Laird G.K."/>
            <person name="Lawlor S."/>
            <person name="Lehvaeslaiho M.H."/>
            <person name="Leversha M.A."/>
            <person name="Lloyd C."/>
            <person name="Lloyd D.M."/>
            <person name="Lovell J.D."/>
            <person name="Marsh V.L."/>
            <person name="Martin S.L."/>
            <person name="McConnachie L.J."/>
            <person name="McLay K."/>
            <person name="McMurray A.A."/>
            <person name="Milne S.A."/>
            <person name="Mistry D."/>
            <person name="Moore M.J.F."/>
            <person name="Mullikin J.C."/>
            <person name="Nickerson T."/>
            <person name="Oliver K."/>
            <person name="Parker A."/>
            <person name="Patel R."/>
            <person name="Pearce T.A.V."/>
            <person name="Peck A.I."/>
            <person name="Phillimore B.J.C.T."/>
            <person name="Prathalingam S.R."/>
            <person name="Plumb R.W."/>
            <person name="Ramsay H."/>
            <person name="Rice C.M."/>
            <person name="Ross M.T."/>
            <person name="Scott C.E."/>
            <person name="Sehra H.K."/>
            <person name="Shownkeen R."/>
            <person name="Sims S."/>
            <person name="Skuce C.D."/>
            <person name="Smith M.L."/>
            <person name="Soderlund C."/>
            <person name="Steward C.A."/>
            <person name="Sulston J.E."/>
            <person name="Swann R.M."/>
            <person name="Sycamore N."/>
            <person name="Taylor R."/>
            <person name="Tee L."/>
            <person name="Thomas D.W."/>
            <person name="Thorpe A."/>
            <person name="Tracey A."/>
            <person name="Tromans A.C."/>
            <person name="Vaudin M."/>
            <person name="Wall M."/>
            <person name="Wallis J.M."/>
            <person name="Whitehead S.L."/>
            <person name="Whittaker P."/>
            <person name="Willey D.L."/>
            <person name="Williams L."/>
            <person name="Williams S.A."/>
            <person name="Wilming L."/>
            <person name="Wray P.W."/>
            <person name="Hubbard T."/>
            <person name="Durbin R.M."/>
            <person name="Bentley D.R."/>
            <person name="Beck S."/>
            <person name="Rogers J."/>
        </authorList>
    </citation>
    <scope>NUCLEOTIDE SEQUENCE [LARGE SCALE GENOMIC DNA]</scope>
</reference>
<reference key="3">
    <citation type="submission" date="2005-09" db="EMBL/GenBank/DDBJ databases">
        <authorList>
            <person name="Mural R.J."/>
            <person name="Istrail S."/>
            <person name="Sutton G.G."/>
            <person name="Florea L."/>
            <person name="Halpern A.L."/>
            <person name="Mobarry C.M."/>
            <person name="Lippert R."/>
            <person name="Walenz B."/>
            <person name="Shatkay H."/>
            <person name="Dew I."/>
            <person name="Miller J.R."/>
            <person name="Flanigan M.J."/>
            <person name="Edwards N.J."/>
            <person name="Bolanos R."/>
            <person name="Fasulo D."/>
            <person name="Halldorsson B.V."/>
            <person name="Hannenhalli S."/>
            <person name="Turner R."/>
            <person name="Yooseph S."/>
            <person name="Lu F."/>
            <person name="Nusskern D.R."/>
            <person name="Shue B.C."/>
            <person name="Zheng X.H."/>
            <person name="Zhong F."/>
            <person name="Delcher A.L."/>
            <person name="Huson D.H."/>
            <person name="Kravitz S.A."/>
            <person name="Mouchard L."/>
            <person name="Reinert K."/>
            <person name="Remington K.A."/>
            <person name="Clark A.G."/>
            <person name="Waterman M.S."/>
            <person name="Eichler E.E."/>
            <person name="Adams M.D."/>
            <person name="Hunkapiller M.W."/>
            <person name="Myers E.W."/>
            <person name="Venter J.C."/>
        </authorList>
    </citation>
    <scope>NUCLEOTIDE SEQUENCE [LARGE SCALE GENOMIC DNA]</scope>
</reference>
<reference key="4">
    <citation type="journal article" date="2004" name="Genome Res.">
        <title>The status, quality, and expansion of the NIH full-length cDNA project: the Mammalian Gene Collection (MGC).</title>
        <authorList>
            <consortium name="The MGC Project Team"/>
        </authorList>
    </citation>
    <scope>NUCLEOTIDE SEQUENCE [LARGE SCALE MRNA]</scope>
    <scope>VARIANT LEU-138</scope>
    <source>
        <tissue>Kidney</tissue>
    </source>
</reference>
<organism>
    <name type="scientific">Homo sapiens</name>
    <name type="common">Human</name>
    <dbReference type="NCBI Taxonomy" id="9606"/>
    <lineage>
        <taxon>Eukaryota</taxon>
        <taxon>Metazoa</taxon>
        <taxon>Chordata</taxon>
        <taxon>Craniata</taxon>
        <taxon>Vertebrata</taxon>
        <taxon>Euteleostomi</taxon>
        <taxon>Mammalia</taxon>
        <taxon>Eutheria</taxon>
        <taxon>Euarchontoglires</taxon>
        <taxon>Primates</taxon>
        <taxon>Haplorrhini</taxon>
        <taxon>Catarrhini</taxon>
        <taxon>Hominidae</taxon>
        <taxon>Homo</taxon>
    </lineage>
</organism>
<gene>
    <name type="primary">LRRN4</name>
    <name type="synonym">C20orf75</name>
</gene>
<comment type="function">
    <text evidence="1">May play an important role in hippocampus-dependent long-lasting memory.</text>
</comment>
<comment type="interaction">
    <interactant intactId="EBI-745046">
        <id>Q8WUT4</id>
    </interactant>
    <interactant intactId="EBI-3867333">
        <id>A8MQ03</id>
        <label>CYSRT1</label>
    </interactant>
    <organismsDiffer>false</organismsDiffer>
    <experiments>3</experiments>
</comment>
<comment type="interaction">
    <interactant intactId="EBI-745046">
        <id>Q8WUT4</id>
    </interactant>
    <interactant intactId="EBI-10264440">
        <id>Q8IYY4</id>
        <label>DZIP1L</label>
    </interactant>
    <organismsDiffer>false</organismsDiffer>
    <experiments>3</experiments>
</comment>
<comment type="interaction">
    <interactant intactId="EBI-745046">
        <id>Q8WUT4</id>
    </interactant>
    <interactant intactId="EBI-7116203">
        <id>O75031</id>
        <label>HSF2BP</label>
    </interactant>
    <organismsDiffer>false</organismsDiffer>
    <experiments>3</experiments>
</comment>
<comment type="interaction">
    <interactant intactId="EBI-745046">
        <id>Q8WUT4</id>
    </interactant>
    <interactant intactId="EBI-11959885">
        <id>Q07627</id>
        <label>KRTAP1-1</label>
    </interactant>
    <organismsDiffer>false</organismsDiffer>
    <experiments>3</experiments>
</comment>
<comment type="interaction">
    <interactant intactId="EBI-745046">
        <id>Q8WUT4</id>
    </interactant>
    <interactant intactId="EBI-3957694">
        <id>Q9BYR6</id>
        <label>KRTAP3-3</label>
    </interactant>
    <organismsDiffer>false</organismsDiffer>
    <experiments>3</experiments>
</comment>
<comment type="subcellular location">
    <subcellularLocation>
        <location evidence="6">Membrane</location>
        <topology evidence="6">Single-pass type I membrane protein</topology>
    </subcellularLocation>
</comment>
<evidence type="ECO:0000250" key="1"/>
<evidence type="ECO:0000255" key="2"/>
<evidence type="ECO:0000255" key="3">
    <source>
        <dbReference type="PROSITE-ProRule" id="PRU00316"/>
    </source>
</evidence>
<evidence type="ECO:0000256" key="4">
    <source>
        <dbReference type="SAM" id="MobiDB-lite"/>
    </source>
</evidence>
<evidence type="ECO:0000269" key="5">
    <source>
    </source>
</evidence>
<evidence type="ECO:0000305" key="6"/>
<accession>Q8WUT4</accession>
<accession>A8K258</accession>
<accession>Q5JWV6</accession>
<accession>Q9H419</accession>
<sequence>MRQTLPLLLLTVLRPSWADPPQEKVPLFRVTQQGPWGSSGSNATDSPCEGLPAADATALTLANRNLERLPGCLPRTLRSLDASHNLLRALSTSELGHLEQLQVLTLRHNRIAALRWGPGGPAGLHTLDLSYNQLAALPPCTGPALSSLRALALAGNPLRALQPRAFACFPALQLLNLSCTALGRGAQGGIAEAAFAGEDGAPLVTLEVLDLSGTFLERVESGWIRDLPKLTSLYLRKMPRLTTLEGDIFKMTPNLQQLDCQDSPALASVATHIFQDTPHLQVLLFQNCNLSSFPPWTLDSSQVLSINLFGNPLTCSCDLSWLLTDAKRTVLSRAADTMCAPAAGSSGPFSASLSLSQLPGVCQSDQSTTLGASHPPCFNRSTYAQGTTVAPSAAPATRPAGDQQSVSKAPNVGSRTIAAWPHSDAREGTAPSTTNSVAGHSNSSVFPRAASTTRTQHRGEHAPELVLEPDISAASTPLASKLLGPFPTSWDRSISSPQPGQRTHATPQAPNPSLSEGEIPVLLLDDYSEEEEGRKEEVGTPHQDVPCDYHPCKHLQTPCAELQRRWRCRCPGLSGEDTIPDPPRLQGVTETTDTSALVHWCAPNSVVHGYQIRYSAEGWAGNQSVVGVIYATARQHPLYGLSPGTTYRVCVLAANRAGLSQPRSSGWRSPCAAFTTKPSFALLLSGLCAASGLLLASTVVLSACLCRRGQTLGLQRCDTHLVAYKNPAFDDYPLGLQTVS</sequence>
<name>LRRN4_HUMAN</name>
<protein>
    <recommendedName>
        <fullName>Leucine-rich repeat neuronal protein 4</fullName>
    </recommendedName>
    <alternativeName>
        <fullName>Neuronal leucine-rich repeat protein 4</fullName>
        <shortName>NLRR-4</shortName>
    </alternativeName>
</protein>
<proteinExistence type="evidence at protein level"/>
<dbReference type="EMBL" id="AK290123">
    <property type="protein sequence ID" value="BAF82812.1"/>
    <property type="molecule type" value="mRNA"/>
</dbReference>
<dbReference type="EMBL" id="AL035461">
    <property type="status" value="NOT_ANNOTATED_CDS"/>
    <property type="molecule type" value="Genomic_DNA"/>
</dbReference>
<dbReference type="EMBL" id="AL118505">
    <property type="status" value="NOT_ANNOTATED_CDS"/>
    <property type="molecule type" value="Genomic_DNA"/>
</dbReference>
<dbReference type="EMBL" id="CH471133">
    <property type="protein sequence ID" value="EAX10397.1"/>
    <property type="molecule type" value="Genomic_DNA"/>
</dbReference>
<dbReference type="EMBL" id="BC027720">
    <property type="protein sequence ID" value="AAH27720.1"/>
    <property type="molecule type" value="mRNA"/>
</dbReference>
<dbReference type="CCDS" id="CCDS13097.1"/>
<dbReference type="RefSeq" id="NP_689824.2">
    <property type="nucleotide sequence ID" value="NM_152611.5"/>
</dbReference>
<dbReference type="SMR" id="Q8WUT4"/>
<dbReference type="BioGRID" id="127893">
    <property type="interactions" value="7"/>
</dbReference>
<dbReference type="FunCoup" id="Q8WUT4">
    <property type="interactions" value="51"/>
</dbReference>
<dbReference type="IntAct" id="Q8WUT4">
    <property type="interactions" value="6"/>
</dbReference>
<dbReference type="STRING" id="9606.ENSP00000368135"/>
<dbReference type="GlyCosmos" id="Q8WUT4">
    <property type="glycosylation" value="8 sites, 2 glycans"/>
</dbReference>
<dbReference type="GlyGen" id="Q8WUT4">
    <property type="glycosylation" value="11 sites, 3 N-linked glycans (1 site), 3 O-linked glycans (5 sites)"/>
</dbReference>
<dbReference type="iPTMnet" id="Q8WUT4"/>
<dbReference type="PhosphoSitePlus" id="Q8WUT4"/>
<dbReference type="BioMuta" id="LRRN4"/>
<dbReference type="DMDM" id="90110015"/>
<dbReference type="jPOST" id="Q8WUT4"/>
<dbReference type="MassIVE" id="Q8WUT4"/>
<dbReference type="PaxDb" id="9606-ENSP00000368135"/>
<dbReference type="PeptideAtlas" id="Q8WUT4"/>
<dbReference type="ProteomicsDB" id="74707"/>
<dbReference type="TopDownProteomics" id="Q8WUT4"/>
<dbReference type="Antibodypedia" id="2410">
    <property type="antibodies" value="156 antibodies from 23 providers"/>
</dbReference>
<dbReference type="DNASU" id="164312"/>
<dbReference type="Ensembl" id="ENST00000378858.5">
    <property type="protein sequence ID" value="ENSP00000368135.4"/>
    <property type="gene ID" value="ENSG00000125872.9"/>
</dbReference>
<dbReference type="GeneID" id="164312"/>
<dbReference type="KEGG" id="hsa:164312"/>
<dbReference type="MANE-Select" id="ENST00000378858.5">
    <property type="protein sequence ID" value="ENSP00000368135.4"/>
    <property type="RefSeq nucleotide sequence ID" value="NM_152611.5"/>
    <property type="RefSeq protein sequence ID" value="NP_689824.2"/>
</dbReference>
<dbReference type="UCSC" id="uc002wmo.4">
    <property type="organism name" value="human"/>
</dbReference>
<dbReference type="AGR" id="HGNC:16208"/>
<dbReference type="CTD" id="164312"/>
<dbReference type="DisGeNET" id="164312"/>
<dbReference type="GeneCards" id="LRRN4"/>
<dbReference type="HGNC" id="HGNC:16208">
    <property type="gene designation" value="LRRN4"/>
</dbReference>
<dbReference type="HPA" id="ENSG00000125872">
    <property type="expression patterns" value="Group enriched (adipose tissue, lung)"/>
</dbReference>
<dbReference type="MIM" id="619706">
    <property type="type" value="gene"/>
</dbReference>
<dbReference type="neXtProt" id="NX_Q8WUT4"/>
<dbReference type="OpenTargets" id="ENSG00000125872"/>
<dbReference type="PharmGKB" id="PA162394670"/>
<dbReference type="VEuPathDB" id="HostDB:ENSG00000125872"/>
<dbReference type="eggNOG" id="KOG0619">
    <property type="taxonomic scope" value="Eukaryota"/>
</dbReference>
<dbReference type="GeneTree" id="ENSGT00940000161448"/>
<dbReference type="HOGENOM" id="CLU_022697_0_0_1"/>
<dbReference type="InParanoid" id="Q8WUT4"/>
<dbReference type="OMA" id="LTQQGPW"/>
<dbReference type="OrthoDB" id="676979at2759"/>
<dbReference type="PAN-GO" id="Q8WUT4">
    <property type="GO annotations" value="2 GO annotations based on evolutionary models"/>
</dbReference>
<dbReference type="PhylomeDB" id="Q8WUT4"/>
<dbReference type="TreeFam" id="TF351118"/>
<dbReference type="PathwayCommons" id="Q8WUT4"/>
<dbReference type="SignaLink" id="Q8WUT4"/>
<dbReference type="BioGRID-ORCS" id="164312">
    <property type="hits" value="12 hits in 1142 CRISPR screens"/>
</dbReference>
<dbReference type="ChiTaRS" id="LRRN4">
    <property type="organism name" value="human"/>
</dbReference>
<dbReference type="GenomeRNAi" id="164312"/>
<dbReference type="Pharos" id="Q8WUT4">
    <property type="development level" value="Tbio"/>
</dbReference>
<dbReference type="PRO" id="PR:Q8WUT4"/>
<dbReference type="Proteomes" id="UP000005640">
    <property type="component" value="Chromosome 20"/>
</dbReference>
<dbReference type="RNAct" id="Q8WUT4">
    <property type="molecule type" value="protein"/>
</dbReference>
<dbReference type="Bgee" id="ENSG00000125872">
    <property type="expression patterns" value="Expressed in male germ line stem cell (sensu Vertebrata) in testis and 51 other cell types or tissues"/>
</dbReference>
<dbReference type="GO" id="GO:0070062">
    <property type="term" value="C:extracellular exosome"/>
    <property type="evidence" value="ECO:0007005"/>
    <property type="project" value="UniProtKB"/>
</dbReference>
<dbReference type="GO" id="GO:0005886">
    <property type="term" value="C:plasma membrane"/>
    <property type="evidence" value="ECO:0000318"/>
    <property type="project" value="GO_Central"/>
</dbReference>
<dbReference type="GO" id="GO:0007616">
    <property type="term" value="P:long-term memory"/>
    <property type="evidence" value="ECO:0000318"/>
    <property type="project" value="GO_Central"/>
</dbReference>
<dbReference type="GO" id="GO:0008542">
    <property type="term" value="P:visual learning"/>
    <property type="evidence" value="ECO:0007669"/>
    <property type="project" value="Ensembl"/>
</dbReference>
<dbReference type="CDD" id="cd00063">
    <property type="entry name" value="FN3"/>
    <property type="match status" value="1"/>
</dbReference>
<dbReference type="FunFam" id="2.60.40.10:FF:001875">
    <property type="entry name" value="Leucine rich repeat neuronal 4"/>
    <property type="match status" value="1"/>
</dbReference>
<dbReference type="FunFam" id="3.80.10.10:FF:000739">
    <property type="entry name" value="Leucine rich repeat neuronal 4"/>
    <property type="match status" value="1"/>
</dbReference>
<dbReference type="FunFam" id="3.80.10.10:FF:000740">
    <property type="entry name" value="Leucine rich repeat neuronal 4"/>
    <property type="match status" value="1"/>
</dbReference>
<dbReference type="Gene3D" id="2.60.40.10">
    <property type="entry name" value="Immunoglobulins"/>
    <property type="match status" value="1"/>
</dbReference>
<dbReference type="Gene3D" id="3.80.10.10">
    <property type="entry name" value="Ribonuclease Inhibitor"/>
    <property type="match status" value="2"/>
</dbReference>
<dbReference type="InterPro" id="IPR003961">
    <property type="entry name" value="FN3_dom"/>
</dbReference>
<dbReference type="InterPro" id="IPR036116">
    <property type="entry name" value="FN3_sf"/>
</dbReference>
<dbReference type="InterPro" id="IPR013783">
    <property type="entry name" value="Ig-like_fold"/>
</dbReference>
<dbReference type="InterPro" id="IPR001611">
    <property type="entry name" value="Leu-rich_rpt"/>
</dbReference>
<dbReference type="InterPro" id="IPR003591">
    <property type="entry name" value="Leu-rich_rpt_typical-subtyp"/>
</dbReference>
<dbReference type="InterPro" id="IPR032675">
    <property type="entry name" value="LRR_dom_sf"/>
</dbReference>
<dbReference type="PANTHER" id="PTHR24366">
    <property type="entry name" value="IG(IMMUNOGLOBULIN) AND LRR(LEUCINE RICH REPEAT) DOMAINS"/>
    <property type="match status" value="1"/>
</dbReference>
<dbReference type="PANTHER" id="PTHR24366:SF13">
    <property type="entry name" value="LEUCINE-RICH REPEAT NEURONAL PROTEIN 4"/>
    <property type="match status" value="1"/>
</dbReference>
<dbReference type="Pfam" id="PF00041">
    <property type="entry name" value="fn3"/>
    <property type="match status" value="1"/>
</dbReference>
<dbReference type="Pfam" id="PF13855">
    <property type="entry name" value="LRR_8"/>
    <property type="match status" value="1"/>
</dbReference>
<dbReference type="SMART" id="SM00060">
    <property type="entry name" value="FN3"/>
    <property type="match status" value="1"/>
</dbReference>
<dbReference type="SMART" id="SM00369">
    <property type="entry name" value="LRR_TYP"/>
    <property type="match status" value="7"/>
</dbReference>
<dbReference type="SUPFAM" id="SSF49265">
    <property type="entry name" value="Fibronectin type III"/>
    <property type="match status" value="1"/>
</dbReference>
<dbReference type="SUPFAM" id="SSF52058">
    <property type="entry name" value="L domain-like"/>
    <property type="match status" value="1"/>
</dbReference>
<dbReference type="PROSITE" id="PS50853">
    <property type="entry name" value="FN3"/>
    <property type="match status" value="1"/>
</dbReference>